<name>IF2_LEVBA</name>
<reference key="1">
    <citation type="journal article" date="2006" name="Proc. Natl. Acad. Sci. U.S.A.">
        <title>Comparative genomics of the lactic acid bacteria.</title>
        <authorList>
            <person name="Makarova K.S."/>
            <person name="Slesarev A."/>
            <person name="Wolf Y.I."/>
            <person name="Sorokin A."/>
            <person name="Mirkin B."/>
            <person name="Koonin E.V."/>
            <person name="Pavlov A."/>
            <person name="Pavlova N."/>
            <person name="Karamychev V."/>
            <person name="Polouchine N."/>
            <person name="Shakhova V."/>
            <person name="Grigoriev I."/>
            <person name="Lou Y."/>
            <person name="Rohksar D."/>
            <person name="Lucas S."/>
            <person name="Huang K."/>
            <person name="Goodstein D.M."/>
            <person name="Hawkins T."/>
            <person name="Plengvidhya V."/>
            <person name="Welker D."/>
            <person name="Hughes J."/>
            <person name="Goh Y."/>
            <person name="Benson A."/>
            <person name="Baldwin K."/>
            <person name="Lee J.-H."/>
            <person name="Diaz-Muniz I."/>
            <person name="Dosti B."/>
            <person name="Smeianov V."/>
            <person name="Wechter W."/>
            <person name="Barabote R."/>
            <person name="Lorca G."/>
            <person name="Altermann E."/>
            <person name="Barrangou R."/>
            <person name="Ganesan B."/>
            <person name="Xie Y."/>
            <person name="Rawsthorne H."/>
            <person name="Tamir D."/>
            <person name="Parker C."/>
            <person name="Breidt F."/>
            <person name="Broadbent J.R."/>
            <person name="Hutkins R."/>
            <person name="O'Sullivan D."/>
            <person name="Steele J."/>
            <person name="Unlu G."/>
            <person name="Saier M.H. Jr."/>
            <person name="Klaenhammer T."/>
            <person name="Richardson P."/>
            <person name="Kozyavkin S."/>
            <person name="Weimer B.C."/>
            <person name="Mills D.A."/>
        </authorList>
    </citation>
    <scope>NUCLEOTIDE SEQUENCE [LARGE SCALE GENOMIC DNA]</scope>
    <source>
        <strain>ATCC 367 / BCRC 12310 / CIP 105137 / JCM 1170 / LMG 11437 / NCIMB 947 / NCTC 947</strain>
    </source>
</reference>
<organism>
    <name type="scientific">Levilactobacillus brevis (strain ATCC 367 / BCRC 12310 / CIP 105137 / JCM 1170 / LMG 11437 / NCIMB 947 / NCTC 947)</name>
    <name type="common">Lactobacillus brevis</name>
    <dbReference type="NCBI Taxonomy" id="387344"/>
    <lineage>
        <taxon>Bacteria</taxon>
        <taxon>Bacillati</taxon>
        <taxon>Bacillota</taxon>
        <taxon>Bacilli</taxon>
        <taxon>Lactobacillales</taxon>
        <taxon>Lactobacillaceae</taxon>
        <taxon>Levilactobacillus</taxon>
    </lineage>
</organism>
<evidence type="ECO:0000250" key="1"/>
<evidence type="ECO:0000255" key="2">
    <source>
        <dbReference type="HAMAP-Rule" id="MF_00100"/>
    </source>
</evidence>
<evidence type="ECO:0000256" key="3">
    <source>
        <dbReference type="SAM" id="MobiDB-lite"/>
    </source>
</evidence>
<proteinExistence type="inferred from homology"/>
<feature type="chain" id="PRO_1000008258" description="Translation initiation factor IF-2">
    <location>
        <begin position="1"/>
        <end position="780"/>
    </location>
</feature>
<feature type="domain" description="tr-type G">
    <location>
        <begin position="281"/>
        <end position="450"/>
    </location>
</feature>
<feature type="region of interest" description="Disordered" evidence="3">
    <location>
        <begin position="24"/>
        <end position="194"/>
    </location>
</feature>
<feature type="region of interest" description="G1" evidence="1">
    <location>
        <begin position="290"/>
        <end position="297"/>
    </location>
</feature>
<feature type="region of interest" description="G2" evidence="1">
    <location>
        <begin position="315"/>
        <end position="319"/>
    </location>
</feature>
<feature type="region of interest" description="G3" evidence="1">
    <location>
        <begin position="336"/>
        <end position="339"/>
    </location>
</feature>
<feature type="region of interest" description="G4" evidence="1">
    <location>
        <begin position="390"/>
        <end position="393"/>
    </location>
</feature>
<feature type="region of interest" description="G5" evidence="1">
    <location>
        <begin position="426"/>
        <end position="428"/>
    </location>
</feature>
<feature type="compositionally biased region" description="Polar residues" evidence="3">
    <location>
        <begin position="59"/>
        <end position="71"/>
    </location>
</feature>
<feature type="compositionally biased region" description="Polar residues" evidence="3">
    <location>
        <begin position="80"/>
        <end position="90"/>
    </location>
</feature>
<feature type="compositionally biased region" description="Low complexity" evidence="3">
    <location>
        <begin position="98"/>
        <end position="114"/>
    </location>
</feature>
<feature type="compositionally biased region" description="Low complexity" evidence="3">
    <location>
        <begin position="132"/>
        <end position="158"/>
    </location>
</feature>
<feature type="compositionally biased region" description="Basic residues" evidence="3">
    <location>
        <begin position="159"/>
        <end position="176"/>
    </location>
</feature>
<feature type="compositionally biased region" description="Basic and acidic residues" evidence="3">
    <location>
        <begin position="177"/>
        <end position="194"/>
    </location>
</feature>
<feature type="binding site" evidence="2">
    <location>
        <begin position="290"/>
        <end position="297"/>
    </location>
    <ligand>
        <name>GTP</name>
        <dbReference type="ChEBI" id="CHEBI:37565"/>
    </ligand>
</feature>
<feature type="binding site" evidence="2">
    <location>
        <begin position="336"/>
        <end position="340"/>
    </location>
    <ligand>
        <name>GTP</name>
        <dbReference type="ChEBI" id="CHEBI:37565"/>
    </ligand>
</feature>
<feature type="binding site" evidence="2">
    <location>
        <begin position="390"/>
        <end position="393"/>
    </location>
    <ligand>
        <name>GTP</name>
        <dbReference type="ChEBI" id="CHEBI:37565"/>
    </ligand>
</feature>
<protein>
    <recommendedName>
        <fullName evidence="2">Translation initiation factor IF-2</fullName>
    </recommendedName>
</protein>
<dbReference type="EMBL" id="CP000416">
    <property type="protein sequence ID" value="ABJ64437.1"/>
    <property type="molecule type" value="Genomic_DNA"/>
</dbReference>
<dbReference type="RefSeq" id="WP_011668010.1">
    <property type="nucleotide sequence ID" value="NC_008497.1"/>
</dbReference>
<dbReference type="SMR" id="Q03QT5"/>
<dbReference type="STRING" id="387344.LVIS_1335"/>
<dbReference type="KEGG" id="lbr:LVIS_1335"/>
<dbReference type="PATRIC" id="fig|387344.15.peg.1269"/>
<dbReference type="eggNOG" id="COG0532">
    <property type="taxonomic scope" value="Bacteria"/>
</dbReference>
<dbReference type="HOGENOM" id="CLU_006301_5_1_9"/>
<dbReference type="Proteomes" id="UP000001652">
    <property type="component" value="Chromosome"/>
</dbReference>
<dbReference type="GO" id="GO:0005829">
    <property type="term" value="C:cytosol"/>
    <property type="evidence" value="ECO:0007669"/>
    <property type="project" value="TreeGrafter"/>
</dbReference>
<dbReference type="GO" id="GO:0005525">
    <property type="term" value="F:GTP binding"/>
    <property type="evidence" value="ECO:0007669"/>
    <property type="project" value="UniProtKB-KW"/>
</dbReference>
<dbReference type="GO" id="GO:0003924">
    <property type="term" value="F:GTPase activity"/>
    <property type="evidence" value="ECO:0007669"/>
    <property type="project" value="UniProtKB-UniRule"/>
</dbReference>
<dbReference type="GO" id="GO:0003743">
    <property type="term" value="F:translation initiation factor activity"/>
    <property type="evidence" value="ECO:0007669"/>
    <property type="project" value="UniProtKB-UniRule"/>
</dbReference>
<dbReference type="CDD" id="cd01887">
    <property type="entry name" value="IF2_eIF5B"/>
    <property type="match status" value="1"/>
</dbReference>
<dbReference type="CDD" id="cd03702">
    <property type="entry name" value="IF2_mtIF2_II"/>
    <property type="match status" value="1"/>
</dbReference>
<dbReference type="CDD" id="cd03692">
    <property type="entry name" value="mtIF2_IVc"/>
    <property type="match status" value="1"/>
</dbReference>
<dbReference type="FunFam" id="2.40.30.10:FF:000007">
    <property type="entry name" value="Translation initiation factor IF-2"/>
    <property type="match status" value="1"/>
</dbReference>
<dbReference type="FunFam" id="2.40.30.10:FF:000008">
    <property type="entry name" value="Translation initiation factor IF-2"/>
    <property type="match status" value="1"/>
</dbReference>
<dbReference type="FunFam" id="3.40.50.10050:FF:000001">
    <property type="entry name" value="Translation initiation factor IF-2"/>
    <property type="match status" value="1"/>
</dbReference>
<dbReference type="FunFam" id="3.40.50.300:FF:000019">
    <property type="entry name" value="Translation initiation factor IF-2"/>
    <property type="match status" value="1"/>
</dbReference>
<dbReference type="Gene3D" id="1.10.10.2480">
    <property type="match status" value="1"/>
</dbReference>
<dbReference type="Gene3D" id="3.40.50.300">
    <property type="entry name" value="P-loop containing nucleotide triphosphate hydrolases"/>
    <property type="match status" value="1"/>
</dbReference>
<dbReference type="Gene3D" id="2.40.30.10">
    <property type="entry name" value="Translation factors"/>
    <property type="match status" value="2"/>
</dbReference>
<dbReference type="Gene3D" id="3.40.50.10050">
    <property type="entry name" value="Translation initiation factor IF- 2, domain 3"/>
    <property type="match status" value="1"/>
</dbReference>
<dbReference type="HAMAP" id="MF_00100_B">
    <property type="entry name" value="IF_2_B"/>
    <property type="match status" value="1"/>
</dbReference>
<dbReference type="InterPro" id="IPR053905">
    <property type="entry name" value="EF-G-like_DII"/>
</dbReference>
<dbReference type="InterPro" id="IPR044145">
    <property type="entry name" value="IF2_II"/>
</dbReference>
<dbReference type="InterPro" id="IPR006847">
    <property type="entry name" value="IF2_N"/>
</dbReference>
<dbReference type="InterPro" id="IPR027417">
    <property type="entry name" value="P-loop_NTPase"/>
</dbReference>
<dbReference type="InterPro" id="IPR005225">
    <property type="entry name" value="Small_GTP-bd"/>
</dbReference>
<dbReference type="InterPro" id="IPR000795">
    <property type="entry name" value="T_Tr_GTP-bd_dom"/>
</dbReference>
<dbReference type="InterPro" id="IPR000178">
    <property type="entry name" value="TF_IF2_bacterial-like"/>
</dbReference>
<dbReference type="InterPro" id="IPR015760">
    <property type="entry name" value="TIF_IF2"/>
</dbReference>
<dbReference type="InterPro" id="IPR023115">
    <property type="entry name" value="TIF_IF2_dom3"/>
</dbReference>
<dbReference type="InterPro" id="IPR036925">
    <property type="entry name" value="TIF_IF2_dom3_sf"/>
</dbReference>
<dbReference type="InterPro" id="IPR009000">
    <property type="entry name" value="Transl_B-barrel_sf"/>
</dbReference>
<dbReference type="NCBIfam" id="TIGR00487">
    <property type="entry name" value="IF-2"/>
    <property type="match status" value="1"/>
</dbReference>
<dbReference type="NCBIfam" id="TIGR00231">
    <property type="entry name" value="small_GTP"/>
    <property type="match status" value="1"/>
</dbReference>
<dbReference type="PANTHER" id="PTHR43381:SF5">
    <property type="entry name" value="TR-TYPE G DOMAIN-CONTAINING PROTEIN"/>
    <property type="match status" value="1"/>
</dbReference>
<dbReference type="PANTHER" id="PTHR43381">
    <property type="entry name" value="TRANSLATION INITIATION FACTOR IF-2-RELATED"/>
    <property type="match status" value="1"/>
</dbReference>
<dbReference type="Pfam" id="PF22042">
    <property type="entry name" value="EF-G_D2"/>
    <property type="match status" value="1"/>
</dbReference>
<dbReference type="Pfam" id="PF00009">
    <property type="entry name" value="GTP_EFTU"/>
    <property type="match status" value="1"/>
</dbReference>
<dbReference type="Pfam" id="PF11987">
    <property type="entry name" value="IF-2"/>
    <property type="match status" value="1"/>
</dbReference>
<dbReference type="Pfam" id="PF04760">
    <property type="entry name" value="IF2_N"/>
    <property type="match status" value="2"/>
</dbReference>
<dbReference type="SUPFAM" id="SSF52156">
    <property type="entry name" value="Initiation factor IF2/eIF5b, domain 3"/>
    <property type="match status" value="1"/>
</dbReference>
<dbReference type="SUPFAM" id="SSF52540">
    <property type="entry name" value="P-loop containing nucleoside triphosphate hydrolases"/>
    <property type="match status" value="1"/>
</dbReference>
<dbReference type="SUPFAM" id="SSF50447">
    <property type="entry name" value="Translation proteins"/>
    <property type="match status" value="2"/>
</dbReference>
<dbReference type="PROSITE" id="PS51722">
    <property type="entry name" value="G_TR_2"/>
    <property type="match status" value="1"/>
</dbReference>
<comment type="function">
    <text evidence="2">One of the essential components for the initiation of protein synthesis. Protects formylmethionyl-tRNA from spontaneous hydrolysis and promotes its binding to the 30S ribosomal subunits. Also involved in the hydrolysis of GTP during the formation of the 70S ribosomal complex.</text>
</comment>
<comment type="subcellular location">
    <subcellularLocation>
        <location evidence="2">Cytoplasm</location>
    </subcellularLocation>
</comment>
<comment type="similarity">
    <text evidence="2">Belongs to the TRAFAC class translation factor GTPase superfamily. Classic translation factor GTPase family. IF-2 subfamily.</text>
</comment>
<gene>
    <name evidence="2" type="primary">infB</name>
    <name type="ordered locus">LVIS_1335</name>
</gene>
<accession>Q03QT5</accession>
<sequence>MGKKRIYELAKEINVSSKQIIAKAEEKGFPVKNHMSTLGENEERQLRAAFKPQAKTSHEQSAASAQPQRKVQQPRREKSQGTARTQTTAQKPAGKPANQTQRNNNNKNNGQTGNRQHEQQHSGTGRFGGSLNNNTNNSNGRRNSNNSNSRGGRNSRNNRNNRRRNNNNNNRYKKNQRIKDTNQHKGAPERKNKALPEVLVYTDGMNAQDLAKILHRSSAEIVKKLFMLGVMVNQNQSLDKDTIEILADDYGIQAQEKVEVDVTDIDKFFDAEMANKDFEAPRAPVVTIMGHVDHGKTTLLDHLRHSHITDGEAGGITQAIGAYQVHYNDKVITFLDTPGHAAFTEMRARGAEITDITVLVVAADDGVMPQTIEAIHHAKAAGTPIIVAVNKIDKPGANPNHVMEQLTEYELIPEDWGGDTIFVEISAKFGKNIDELLDMILLQSDVLELKANPKQNGVGSVIEARLDQGKGSVATLLVQQGTLHVGDPIVVGNTFGRVRTMVNERGRRIKDATPSTPVEITGLNDVPEAGDRFVVFDDEKTARAAGEERAKEALVKERRNTSHVTLDNLFDSLKEGEMKEVDVIIKADVQGSVEALAGSLKKIDVSGVRVNIIHSAVGAINESDVTLAEASDAIIIGFNVRPTPQARAQADSDKVDIRLHNVIYNAIDEIETAMKGLLEPTYEEEIIGEVEVKDIFHASKVGTIVGGMVTEGYVTSESDVRLIRDGVVIYEGKLGSLKRFKDDVKQVKMGYELGLTIENYNDVKVGDVIEAYVMKEVPVK</sequence>
<keyword id="KW-0963">Cytoplasm</keyword>
<keyword id="KW-0342">GTP-binding</keyword>
<keyword id="KW-0396">Initiation factor</keyword>
<keyword id="KW-0547">Nucleotide-binding</keyword>
<keyword id="KW-0648">Protein biosynthesis</keyword>
<keyword id="KW-1185">Reference proteome</keyword>